<comment type="function">
    <text evidence="1">An RNase that has 5'-3' exonuclease and possibly endoonuclease activity. Involved in maturation of rRNA and in some organisms also mRNA maturation and/or decay (By similarity).</text>
</comment>
<comment type="cofactor">
    <cofactor evidence="2">
        <name>Zn(2+)</name>
        <dbReference type="ChEBI" id="CHEBI:29105"/>
    </cofactor>
    <text evidence="2">Binds up to 2 Zn(2+) ions per subunit. It is not clear if Zn(2+) or Mg(2+) is physiologically important.</text>
</comment>
<comment type="subunit">
    <text evidence="2">Homodimer, may be a subunit of the RNA degradosome.</text>
</comment>
<comment type="subcellular location">
    <subcellularLocation>
        <location evidence="2">Cytoplasm</location>
    </subcellularLocation>
</comment>
<comment type="similarity">
    <text evidence="2">Belongs to the metallo-beta-lactamase superfamily. RNA-metabolizing metallo-beta-lactamase-like family. Bacterial RNase J subfamily.</text>
</comment>
<feature type="chain" id="PRO_0000286843" description="Ribonuclease J 2">
    <location>
        <begin position="1"/>
        <end position="557"/>
    </location>
</feature>
<feature type="binding site" evidence="2">
    <location>
        <position position="76"/>
    </location>
    <ligand>
        <name>Zn(2+)</name>
        <dbReference type="ChEBI" id="CHEBI:29105"/>
        <note>catalytic</note>
    </ligand>
</feature>
<feature type="binding site" evidence="2">
    <location>
        <position position="78"/>
    </location>
    <ligand>
        <name>Zn(2+)</name>
        <dbReference type="ChEBI" id="CHEBI:29105"/>
        <note>catalytic</note>
    </ligand>
</feature>
<feature type="binding site" evidence="2">
    <location>
        <position position="144"/>
    </location>
    <ligand>
        <name>Zn(2+)</name>
        <dbReference type="ChEBI" id="CHEBI:29105"/>
        <note>catalytic</note>
    </ligand>
</feature>
<feature type="binding site" evidence="2">
    <location>
        <position position="166"/>
    </location>
    <ligand>
        <name>Zn(2+)</name>
        <dbReference type="ChEBI" id="CHEBI:29105"/>
        <note>catalytic</note>
    </ligand>
</feature>
<feature type="binding site" evidence="2">
    <location>
        <begin position="366"/>
        <end position="370"/>
    </location>
    <ligand>
        <name>substrate</name>
    </ligand>
</feature>
<protein>
    <recommendedName>
        <fullName evidence="2">Ribonuclease J 2</fullName>
        <shortName evidence="2">RNase J2</shortName>
        <ecNumber evidence="2">3.1.-.-</ecNumber>
    </recommendedName>
</protein>
<accession>Q99UJ7</accession>
<dbReference type="EC" id="3.1.-.-" evidence="2"/>
<dbReference type="EMBL" id="BA000017">
    <property type="protein sequence ID" value="BAB57437.1"/>
    <property type="molecule type" value="Genomic_DNA"/>
</dbReference>
<dbReference type="SMR" id="Q99UJ7"/>
<dbReference type="KEGG" id="sav:SAV1275"/>
<dbReference type="HOGENOM" id="CLU_008727_3_1_9"/>
<dbReference type="PhylomeDB" id="Q99UJ7"/>
<dbReference type="Proteomes" id="UP000002481">
    <property type="component" value="Chromosome"/>
</dbReference>
<dbReference type="GO" id="GO:0005737">
    <property type="term" value="C:cytoplasm"/>
    <property type="evidence" value="ECO:0007669"/>
    <property type="project" value="UniProtKB-SubCell"/>
</dbReference>
<dbReference type="GO" id="GO:0004534">
    <property type="term" value="F:5'-3' RNA exonuclease activity"/>
    <property type="evidence" value="ECO:0007669"/>
    <property type="project" value="UniProtKB-UniRule"/>
</dbReference>
<dbReference type="GO" id="GO:0003723">
    <property type="term" value="F:RNA binding"/>
    <property type="evidence" value="ECO:0007669"/>
    <property type="project" value="UniProtKB-UniRule"/>
</dbReference>
<dbReference type="GO" id="GO:0004521">
    <property type="term" value="F:RNA endonuclease activity"/>
    <property type="evidence" value="ECO:0007669"/>
    <property type="project" value="UniProtKB-UniRule"/>
</dbReference>
<dbReference type="GO" id="GO:0008270">
    <property type="term" value="F:zinc ion binding"/>
    <property type="evidence" value="ECO:0007669"/>
    <property type="project" value="InterPro"/>
</dbReference>
<dbReference type="GO" id="GO:0006364">
    <property type="term" value="P:rRNA processing"/>
    <property type="evidence" value="ECO:0007669"/>
    <property type="project" value="UniProtKB-UniRule"/>
</dbReference>
<dbReference type="CDD" id="cd07714">
    <property type="entry name" value="RNaseJ_MBL-fold"/>
    <property type="match status" value="1"/>
</dbReference>
<dbReference type="FunFam" id="3.10.20.580:FF:000001">
    <property type="entry name" value="Ribonuclease J"/>
    <property type="match status" value="1"/>
</dbReference>
<dbReference type="FunFam" id="3.40.50.10710:FF:000002">
    <property type="entry name" value="Ribonuclease J 2"/>
    <property type="match status" value="1"/>
</dbReference>
<dbReference type="Gene3D" id="3.10.20.580">
    <property type="match status" value="1"/>
</dbReference>
<dbReference type="Gene3D" id="3.40.50.10710">
    <property type="entry name" value="Metallo-hydrolase/oxidoreductase"/>
    <property type="match status" value="1"/>
</dbReference>
<dbReference type="Gene3D" id="3.60.15.10">
    <property type="entry name" value="Ribonuclease Z/Hydroxyacylglutathione hydrolase-like"/>
    <property type="match status" value="1"/>
</dbReference>
<dbReference type="HAMAP" id="MF_01491">
    <property type="entry name" value="RNase_J_bact"/>
    <property type="match status" value="1"/>
</dbReference>
<dbReference type="InterPro" id="IPR001279">
    <property type="entry name" value="Metallo-B-lactamas"/>
</dbReference>
<dbReference type="InterPro" id="IPR036866">
    <property type="entry name" value="RibonucZ/Hydroxyglut_hydro"/>
</dbReference>
<dbReference type="InterPro" id="IPR011108">
    <property type="entry name" value="RMMBL"/>
</dbReference>
<dbReference type="InterPro" id="IPR004613">
    <property type="entry name" value="RNase_J"/>
</dbReference>
<dbReference type="InterPro" id="IPR042173">
    <property type="entry name" value="RNase_J_2"/>
</dbReference>
<dbReference type="InterPro" id="IPR055132">
    <property type="entry name" value="RNase_J_b_CASP"/>
</dbReference>
<dbReference type="InterPro" id="IPR030854">
    <property type="entry name" value="RNase_J_bac"/>
</dbReference>
<dbReference type="InterPro" id="IPR041636">
    <property type="entry name" value="RNase_J_C"/>
</dbReference>
<dbReference type="NCBIfam" id="TIGR00649">
    <property type="entry name" value="MG423"/>
    <property type="match status" value="1"/>
</dbReference>
<dbReference type="PANTHER" id="PTHR43694">
    <property type="entry name" value="RIBONUCLEASE J"/>
    <property type="match status" value="1"/>
</dbReference>
<dbReference type="PANTHER" id="PTHR43694:SF4">
    <property type="entry name" value="RIBONUCLEASE J 2"/>
    <property type="match status" value="1"/>
</dbReference>
<dbReference type="Pfam" id="PF00753">
    <property type="entry name" value="Lactamase_B"/>
    <property type="match status" value="1"/>
</dbReference>
<dbReference type="Pfam" id="PF07521">
    <property type="entry name" value="RMMBL"/>
    <property type="match status" value="1"/>
</dbReference>
<dbReference type="Pfam" id="PF22505">
    <property type="entry name" value="RNase_J_b_CASP"/>
    <property type="match status" value="1"/>
</dbReference>
<dbReference type="Pfam" id="PF17770">
    <property type="entry name" value="RNase_J_C"/>
    <property type="match status" value="1"/>
</dbReference>
<dbReference type="PIRSF" id="PIRSF004803">
    <property type="entry name" value="RnjA"/>
    <property type="match status" value="1"/>
</dbReference>
<dbReference type="SMART" id="SM00849">
    <property type="entry name" value="Lactamase_B"/>
    <property type="match status" value="1"/>
</dbReference>
<dbReference type="SUPFAM" id="SSF56281">
    <property type="entry name" value="Metallo-hydrolase/oxidoreductase"/>
    <property type="match status" value="1"/>
</dbReference>
<evidence type="ECO:0000250" key="1"/>
<evidence type="ECO:0000255" key="2">
    <source>
        <dbReference type="HAMAP-Rule" id="MF_01491"/>
    </source>
</evidence>
<gene>
    <name evidence="2" type="primary">rnj2</name>
    <name type="ordered locus">SAV1275</name>
</gene>
<organism>
    <name type="scientific">Staphylococcus aureus (strain Mu50 / ATCC 700699)</name>
    <dbReference type="NCBI Taxonomy" id="158878"/>
    <lineage>
        <taxon>Bacteria</taxon>
        <taxon>Bacillati</taxon>
        <taxon>Bacillota</taxon>
        <taxon>Bacilli</taxon>
        <taxon>Bacillales</taxon>
        <taxon>Staphylococcaceae</taxon>
        <taxon>Staphylococcus</taxon>
    </lineage>
</organism>
<reference key="1">
    <citation type="journal article" date="2001" name="Lancet">
        <title>Whole genome sequencing of meticillin-resistant Staphylococcus aureus.</title>
        <authorList>
            <person name="Kuroda M."/>
            <person name="Ohta T."/>
            <person name="Uchiyama I."/>
            <person name="Baba T."/>
            <person name="Yuzawa H."/>
            <person name="Kobayashi I."/>
            <person name="Cui L."/>
            <person name="Oguchi A."/>
            <person name="Aoki K."/>
            <person name="Nagai Y."/>
            <person name="Lian J.-Q."/>
            <person name="Ito T."/>
            <person name="Kanamori M."/>
            <person name="Matsumaru H."/>
            <person name="Maruyama A."/>
            <person name="Murakami H."/>
            <person name="Hosoyama A."/>
            <person name="Mizutani-Ui Y."/>
            <person name="Takahashi N.K."/>
            <person name="Sawano T."/>
            <person name="Inoue R."/>
            <person name="Kaito C."/>
            <person name="Sekimizu K."/>
            <person name="Hirakawa H."/>
            <person name="Kuhara S."/>
            <person name="Goto S."/>
            <person name="Yabuzaki J."/>
            <person name="Kanehisa M."/>
            <person name="Yamashita A."/>
            <person name="Oshima K."/>
            <person name="Furuya K."/>
            <person name="Yoshino C."/>
            <person name="Shiba T."/>
            <person name="Hattori M."/>
            <person name="Ogasawara N."/>
            <person name="Hayashi H."/>
            <person name="Hiramatsu K."/>
        </authorList>
    </citation>
    <scope>NUCLEOTIDE SEQUENCE [LARGE SCALE GENOMIC DNA]</scope>
    <source>
        <strain>Mu50 / ATCC 700699</strain>
    </source>
</reference>
<name>RNJ2_STAAM</name>
<sequence length="557" mass="62604">MSLIKKKNKDIRIIPLGGVGEIAKNMYIVEVDDEMFMLDAGLMFPEDEMLGIDIVIPDISYVLENKDKLKGIFLTHGHEHAIGAVSYVLEQLDAPVYGSKLTIALIKENMKARNIDKKVRYYTVNNDSIMRFKNVNISFFNTTHSIPDSLGVCIHTSYGAIVYTGEFKFDQSLHGHYAPDIKRMAEIGEEGVFVLISDSTEAEKPGYNTPENVIEHHMYDAFAKVRGRLIVSCYASNFIRIQQVLNIASKLNRKVSFLGRSLESSFNIARKMGYFDIPKDLLIPITEVDNYPKNEVIIIATGMQGEPVEALSQMAQHKHKIMNIEEGDSVFLAITASANMEVIIANTLNELVRAGAHIIPNNKKIHASSHGCMEELKMMINIMKPEYFIPVQGEFKMQIAHAKLAAEAGVAPEKIFLVEKGDVINYNGKDMILNEKVNSGNILIDGIGIGDVGNIVLRDRHLLAEDGIFIAVVTLDPKNRRIAAGPEIQSRGFVYVRESEDLLREAEEKVREIVEAGLQEKRIEWSEIKQNMRDQISKLLFESTKRRPMIIPVISEI</sequence>
<keyword id="KW-0963">Cytoplasm</keyword>
<keyword id="KW-0255">Endonuclease</keyword>
<keyword id="KW-0269">Exonuclease</keyword>
<keyword id="KW-0378">Hydrolase</keyword>
<keyword id="KW-0479">Metal-binding</keyword>
<keyword id="KW-0540">Nuclease</keyword>
<keyword id="KW-0694">RNA-binding</keyword>
<keyword id="KW-0698">rRNA processing</keyword>
<keyword id="KW-0862">Zinc</keyword>
<proteinExistence type="inferred from homology"/>